<dbReference type="EMBL" id="AF245395">
    <property type="protein sequence ID" value="AAF79146.1"/>
    <property type="molecule type" value="mRNA"/>
</dbReference>
<dbReference type="EMBL" id="AP002047">
    <property type="protein sequence ID" value="BAB03137.1"/>
    <property type="status" value="ALT_SEQ"/>
    <property type="molecule type" value="Genomic_DNA"/>
</dbReference>
<dbReference type="EMBL" id="AC069472">
    <property type="protein sequence ID" value="AAG51072.1"/>
    <property type="status" value="ALT_SEQ"/>
    <property type="molecule type" value="Genomic_DNA"/>
</dbReference>
<dbReference type="EMBL" id="CP002686">
    <property type="protein sequence ID" value="AEE75179.1"/>
    <property type="molecule type" value="Genomic_DNA"/>
</dbReference>
<dbReference type="EMBL" id="AY056293">
    <property type="protein sequence ID" value="AAL07142.1"/>
    <property type="molecule type" value="mRNA"/>
</dbReference>
<dbReference type="EMBL" id="AY150438">
    <property type="protein sequence ID" value="AAN12980.1"/>
    <property type="molecule type" value="mRNA"/>
</dbReference>
<dbReference type="RefSeq" id="NP_566417.3">
    <molecule id="Q9LKZ3-1"/>
    <property type="nucleotide sequence ID" value="NM_112064.5"/>
</dbReference>
<dbReference type="SMR" id="Q9LKZ3"/>
<dbReference type="BioGRID" id="5742">
    <property type="interactions" value="31"/>
</dbReference>
<dbReference type="DIP" id="DIP-33046N"/>
<dbReference type="FunCoup" id="Q9LKZ3">
    <property type="interactions" value="3163"/>
</dbReference>
<dbReference type="IntAct" id="Q9LKZ3">
    <property type="interactions" value="17"/>
</dbReference>
<dbReference type="MINT" id="Q9LKZ3"/>
<dbReference type="STRING" id="3702.Q9LKZ3"/>
<dbReference type="GlyGen" id="Q9LKZ3">
    <property type="glycosylation" value="1 site"/>
</dbReference>
<dbReference type="iPTMnet" id="Q9LKZ3"/>
<dbReference type="PaxDb" id="3702-AT3G12280.1"/>
<dbReference type="ProteomicsDB" id="225977">
    <molecule id="Q9LKZ3-1"/>
</dbReference>
<dbReference type="EnsemblPlants" id="AT3G12280.1">
    <molecule id="Q9LKZ3-1"/>
    <property type="protein sequence ID" value="AT3G12280.1"/>
    <property type="gene ID" value="AT3G12280"/>
</dbReference>
<dbReference type="GeneID" id="820408"/>
<dbReference type="Gramene" id="AT3G12280.1">
    <molecule id="Q9LKZ3-1"/>
    <property type="protein sequence ID" value="AT3G12280.1"/>
    <property type="gene ID" value="AT3G12280"/>
</dbReference>
<dbReference type="KEGG" id="ath:AT3G12280"/>
<dbReference type="Araport" id="AT3G12280"/>
<dbReference type="TAIR" id="AT3G12280">
    <property type="gene designation" value="RBR1"/>
</dbReference>
<dbReference type="eggNOG" id="KOG1010">
    <property type="taxonomic scope" value="Eukaryota"/>
</dbReference>
<dbReference type="InParanoid" id="Q9LKZ3"/>
<dbReference type="OMA" id="AILCELH"/>
<dbReference type="PhylomeDB" id="Q9LKZ3"/>
<dbReference type="PRO" id="PR:Q9LKZ3"/>
<dbReference type="Proteomes" id="UP000006548">
    <property type="component" value="Chromosome 3"/>
</dbReference>
<dbReference type="ExpressionAtlas" id="Q9LKZ3">
    <property type="expression patterns" value="baseline and differential"/>
</dbReference>
<dbReference type="GO" id="GO:0070176">
    <property type="term" value="C:DRM complex"/>
    <property type="evidence" value="ECO:0000314"/>
    <property type="project" value="TAIR"/>
</dbReference>
<dbReference type="GO" id="GO:0005634">
    <property type="term" value="C:nucleus"/>
    <property type="evidence" value="ECO:0000314"/>
    <property type="project" value="UniProtKB"/>
</dbReference>
<dbReference type="GO" id="GO:0003677">
    <property type="term" value="F:DNA binding"/>
    <property type="evidence" value="ECO:0000314"/>
    <property type="project" value="TAIR"/>
</dbReference>
<dbReference type="GO" id="GO:0008356">
    <property type="term" value="P:asymmetric cell division"/>
    <property type="evidence" value="ECO:0000315"/>
    <property type="project" value="UniProtKB"/>
</dbReference>
<dbReference type="GO" id="GO:0030154">
    <property type="term" value="P:cell differentiation"/>
    <property type="evidence" value="ECO:0000315"/>
    <property type="project" value="UniProtKB"/>
</dbReference>
<dbReference type="GO" id="GO:0001708">
    <property type="term" value="P:cell fate specification"/>
    <property type="evidence" value="ECO:0000315"/>
    <property type="project" value="UniProtKB"/>
</dbReference>
<dbReference type="GO" id="GO:0009567">
    <property type="term" value="P:double fertilization forming a zygote and endosperm"/>
    <property type="evidence" value="ECO:0000270"/>
    <property type="project" value="TAIR"/>
</dbReference>
<dbReference type="GO" id="GO:0009553">
    <property type="term" value="P:embryo sac development"/>
    <property type="evidence" value="ECO:0000315"/>
    <property type="project" value="TAIR"/>
</dbReference>
<dbReference type="GO" id="GO:0009960">
    <property type="term" value="P:endosperm development"/>
    <property type="evidence" value="ECO:0000315"/>
    <property type="project" value="TAIR"/>
</dbReference>
<dbReference type="GO" id="GO:0000082">
    <property type="term" value="P:G1/S transition of mitotic cell cycle"/>
    <property type="evidence" value="ECO:0000315"/>
    <property type="project" value="UniProtKB"/>
</dbReference>
<dbReference type="GO" id="GO:0048229">
    <property type="term" value="P:gametophyte development"/>
    <property type="evidence" value="ECO:0000315"/>
    <property type="project" value="UniProtKB"/>
</dbReference>
<dbReference type="GO" id="GO:0022619">
    <property type="term" value="P:generative cell differentiation"/>
    <property type="evidence" value="ECO:0000315"/>
    <property type="project" value="TAIR"/>
</dbReference>
<dbReference type="GO" id="GO:0010377">
    <property type="term" value="P:guard cell fate commitment"/>
    <property type="evidence" value="ECO:0000316"/>
    <property type="project" value="UniProtKB"/>
</dbReference>
<dbReference type="GO" id="GO:0007129">
    <property type="term" value="P:homologous chromosome pairing at meiosis"/>
    <property type="evidence" value="ECO:0000315"/>
    <property type="project" value="UniProtKB"/>
</dbReference>
<dbReference type="GO" id="GO:0048366">
    <property type="term" value="P:leaf development"/>
    <property type="evidence" value="ECO:0000315"/>
    <property type="project" value="TAIR"/>
</dbReference>
<dbReference type="GO" id="GO:1903866">
    <property type="term" value="P:palisade mesophyll development"/>
    <property type="evidence" value="ECO:0000315"/>
    <property type="project" value="UniProtKB"/>
</dbReference>
<dbReference type="GO" id="GO:0009555">
    <property type="term" value="P:pollen development"/>
    <property type="evidence" value="ECO:0000315"/>
    <property type="project" value="TAIR"/>
</dbReference>
<dbReference type="GO" id="GO:0051726">
    <property type="term" value="P:regulation of cell cycle"/>
    <property type="evidence" value="ECO:0000315"/>
    <property type="project" value="TAIR"/>
</dbReference>
<dbReference type="GO" id="GO:0001558">
    <property type="term" value="P:regulation of cell growth"/>
    <property type="evidence" value="ECO:0000315"/>
    <property type="project" value="UniProtKB"/>
</dbReference>
<dbReference type="GO" id="GO:0032875">
    <property type="term" value="P:regulation of DNA endoreduplication"/>
    <property type="evidence" value="ECO:0000315"/>
    <property type="project" value="TAIR"/>
</dbReference>
<dbReference type="GO" id="GO:0051783">
    <property type="term" value="P:regulation of nuclear division"/>
    <property type="evidence" value="ECO:0000315"/>
    <property type="project" value="TAIR"/>
</dbReference>
<dbReference type="GO" id="GO:2000036">
    <property type="term" value="P:regulation of stem cell population maintenance"/>
    <property type="evidence" value="ECO:0000315"/>
    <property type="project" value="UniProtKB"/>
</dbReference>
<dbReference type="GO" id="GO:0006357">
    <property type="term" value="P:regulation of transcription by RNA polymerase II"/>
    <property type="evidence" value="ECO:0007669"/>
    <property type="project" value="InterPro"/>
</dbReference>
<dbReference type="GO" id="GO:0010090">
    <property type="term" value="P:trichome morphogenesis"/>
    <property type="evidence" value="ECO:0000315"/>
    <property type="project" value="TAIR"/>
</dbReference>
<dbReference type="CDD" id="cd20601">
    <property type="entry name" value="CYCLIN_AtRBR_like"/>
    <property type="match status" value="1"/>
</dbReference>
<dbReference type="FunFam" id="1.10.472.10:FF:000030">
    <property type="entry name" value="Retinoblastoma-related protein 1"/>
    <property type="match status" value="1"/>
</dbReference>
<dbReference type="FunFam" id="1.10.472.10:FF:000075">
    <property type="entry name" value="Retinoblastoma-related protein 2"/>
    <property type="match status" value="1"/>
</dbReference>
<dbReference type="Gene3D" id="1.10.472.10">
    <property type="entry name" value="Cyclin-like"/>
    <property type="match status" value="2"/>
</dbReference>
<dbReference type="InterPro" id="IPR036915">
    <property type="entry name" value="Cyclin-like_sf"/>
</dbReference>
<dbReference type="InterPro" id="IPR002720">
    <property type="entry name" value="RB_A"/>
</dbReference>
<dbReference type="InterPro" id="IPR002719">
    <property type="entry name" value="RB_B"/>
</dbReference>
<dbReference type="InterPro" id="IPR028309">
    <property type="entry name" value="RB_fam"/>
</dbReference>
<dbReference type="InterPro" id="IPR024599">
    <property type="entry name" value="RB_N"/>
</dbReference>
<dbReference type="PANTHER" id="PTHR13742:SF17">
    <property type="entry name" value="RE32990P-RELATED"/>
    <property type="match status" value="1"/>
</dbReference>
<dbReference type="PANTHER" id="PTHR13742">
    <property type="entry name" value="RETINOBLASTOMA-ASSOCIATED PROTEIN RB -RELATED"/>
    <property type="match status" value="1"/>
</dbReference>
<dbReference type="Pfam" id="PF11934">
    <property type="entry name" value="DUF3452"/>
    <property type="match status" value="1"/>
</dbReference>
<dbReference type="Pfam" id="PF01858">
    <property type="entry name" value="RB_A"/>
    <property type="match status" value="1"/>
</dbReference>
<dbReference type="Pfam" id="PF01857">
    <property type="entry name" value="RB_B"/>
    <property type="match status" value="1"/>
</dbReference>
<dbReference type="SMART" id="SM01367">
    <property type="entry name" value="DUF3452"/>
    <property type="match status" value="1"/>
</dbReference>
<dbReference type="SMART" id="SM01368">
    <property type="entry name" value="RB_A"/>
    <property type="match status" value="1"/>
</dbReference>
<dbReference type="SUPFAM" id="SSF47954">
    <property type="entry name" value="Cyclin-like"/>
    <property type="match status" value="2"/>
</dbReference>
<organism>
    <name type="scientific">Arabidopsis thaliana</name>
    <name type="common">Mouse-ear cress</name>
    <dbReference type="NCBI Taxonomy" id="3702"/>
    <lineage>
        <taxon>Eukaryota</taxon>
        <taxon>Viridiplantae</taxon>
        <taxon>Streptophyta</taxon>
        <taxon>Embryophyta</taxon>
        <taxon>Tracheophyta</taxon>
        <taxon>Spermatophyta</taxon>
        <taxon>Magnoliopsida</taxon>
        <taxon>eudicotyledons</taxon>
        <taxon>Gunneridae</taxon>
        <taxon>Pentapetalae</taxon>
        <taxon>rosids</taxon>
        <taxon>malvids</taxon>
        <taxon>Brassicales</taxon>
        <taxon>Brassicaceae</taxon>
        <taxon>Camelineae</taxon>
        <taxon>Arabidopsis</taxon>
    </lineage>
</organism>
<name>RBR1_ARATH</name>
<keyword id="KW-0025">Alternative splicing</keyword>
<keyword id="KW-0131">Cell cycle</keyword>
<keyword id="KW-0238">DNA-binding</keyword>
<keyword id="KW-0945">Host-virus interaction</keyword>
<keyword id="KW-0539">Nucleus</keyword>
<keyword id="KW-0597">Phosphoprotein</keyword>
<keyword id="KW-1185">Reference proteome</keyword>
<keyword id="KW-0678">Repressor</keyword>
<keyword id="KW-0804">Transcription</keyword>
<keyword id="KW-0805">Transcription regulation</keyword>
<keyword id="KW-0832">Ubl conjugation</keyword>
<gene>
    <name type="primary">RBR1</name>
    <name type="synonym">RBR</name>
    <name type="ordered locus">At3g12280</name>
    <name type="ORF">F28J15.11</name>
</gene>
<sequence length="1013" mass="112175">MEEVQPPVTPPIEPNGKRSEASLLDICEKVLSLDGSTCDEALKLFTETKRILSASMSNIGSGTREEVERFWFAFILYSVKRLSVRKEADGLSVSGDNEFNLCQILRALKLNIVDFFKELPQFVVKAGSVLGELYGADWENRLQAKEVQANFVHLSLLSKYYKRGFREFFLTYDANAEKNSANSSTYLLDSYRFGWLLFLALRNHAFSRFKDLVTCSNGVVSILAILIIHVPCRFRNFSIQDSSRFVKKGDKGVDLVASLCKIYDASEDELRIVIDKANNLVETILKKKPSPASECQTDKLDNIDPDGLTYFEDLLEETSISTSLITLEKDYYDGKGELDERVFINEEDSLLGSGSLSAGAVNITGVKRKIDALSSPARTFISPLSPHKSPAAKTNGISGATKLAATPVSTAMTTAKWLRTVISPLLPKPSPGLEHFLKSCDRDITNDVTRRAHIILEAIFPNSSLGAQCGGGSLQAVDLMDDIWAEQRRLEACKLYYRVLEAMCKAEAQILHANNLNSLLTNERFHRCMLACSAELVLATHKTITMLFPAVLERTGITAFDLSKVIESFIRHEDSLPRELRRHLNSLEERLLESMVWEKGSSMYNSLIVARPSLALEINQLGLLAEPMPSLDAIAALINFSDGANHASSVQKHETCPGQNGGIRSPKRLCTDYRSILVERNSFTSPVKDRLLALGNVKSKMLPPPLQSAFASPTRPNPGGGGETCAETGINIFFTKINKLAAVRINGMVERLQLSQQIRESVYCFFQHVLAQRTSLLFSRHIDQIILCCFYGVAKISQMSLTFREIIYNYRKQPQCKPLVFRSVYVDALQCRRQGRIGPDHVDIITFYNEIFIPAVKPLLVELGPVRNDRAVEANNKPEGQCPGSPKVSVFPSVPDMSPKKVSAVHNVYVSPLRGSKMDALISHSTKSYYACVGESTHAYQSPSKDLSAINNRLNNSSSNRKRTLNFDAEAGMVSDSMVANSLNLQNQNQNQNGSDASSSGGAAPLKTEPTDS</sequence>
<feature type="chain" id="PRO_0000335252" description="Retinoblastoma-related protein 1">
    <location>
        <begin position="1"/>
        <end position="1013"/>
    </location>
</feature>
<feature type="region of interest" description="Pocket">
    <location>
        <begin position="406"/>
        <end position="858"/>
    </location>
</feature>
<feature type="region of interest" description="Domain A">
    <location>
        <begin position="406"/>
        <end position="607"/>
    </location>
</feature>
<feature type="region of interest" description="Spacer">
    <location>
        <begin position="608"/>
        <end position="727"/>
    </location>
</feature>
<feature type="region of interest" description="Domain B">
    <location>
        <begin position="728"/>
        <end position="858"/>
    </location>
</feature>
<feature type="region of interest" description="Disordered" evidence="1">
    <location>
        <begin position="979"/>
        <end position="1013"/>
    </location>
</feature>
<feature type="compositionally biased region" description="Low complexity" evidence="1">
    <location>
        <begin position="980"/>
        <end position="1004"/>
    </location>
</feature>
<feature type="modified residue" description="Phosphoserine" evidence="35">
    <location>
        <position position="885"/>
    </location>
</feature>
<feature type="modified residue" description="Phosphoserine" evidence="33 34 35">
    <location>
        <position position="898"/>
    </location>
</feature>
<feature type="mutagenesis site" description="Abolishes interaction with HAT2." evidence="28">
    <original>N</original>
    <variation>F</variation>
    <location>
        <position position="849"/>
    </location>
</feature>
<feature type="sequence conflict" description="In Ref. 5; AAL07142." evidence="32" ref="5">
    <original>M</original>
    <variation>I</variation>
    <location>
        <position position="628"/>
    </location>
</feature>
<comment type="function">
    <text evidence="4 6 7 8 10 11 12 13 14 15 16 17 18 19 20 22 24 25 26 27 28 29 30">Key regulator of entry into cell division. Acts as a transcription repressor of E2F target genes, whose activity is required for progress from the G1 to the S phase of the cell cycle. Hyperphosphorylation by CDKA-1 prevents the binding to E2F transcription factors, allowing G1 to S phase transition to operate (PubMed:18064404, PubMed:21444209). Forms a stable complex with E2FA that functions in maintaining cell proliferation through repression of cell differentiation (PubMed:22307083). Plays a central role in the mechanism controlling meristem cell differentiation, cell fate establishment and cell fate maintenance during organogenesis and gametogenesis (PubMed:16377572, PubMed:16815954, PubMed:19359496, PubMed:20525851, PubMed:20585548, PubMed:20683442, PubMed:22595674, PubMed:24285791, PubMed:25303364). Required during lateral organ production (PubMed:20525851). Also involved in controlling asymmetric divisions of stem cells in different stem cell niches (PubMed:22921914, PubMed:23104828, PubMed:24302889). Acts as a negative regulator of cell proliferation during leaf and gametophytes development (PubMed:15201912, PubMed:16361519, PubMed:18976913). At later stages of development, restricts the progression through additional endocycles (PubMed:16361519). In the leaf, plays a role in the control of the mesophyll differentiation (PubMed:24118480). Another role is its implication in the regulation of imprinted genes. Acts together with MSI1 to repress the expression of MET1 during gametogenesis. This in turn activates expression of the imprinted genes FIS2 and FWA (PubMed:18700816). Regulates many genes of the polycomb repressive complex 2 (PRC2) (PubMed:18976913, PubMed:19704913, PubMed:20585548). Plays an important role in meiosis affecting different aspects of this complex process (PubMed:21217641). Functions as a positive regulator of the developmental switch from embryonic heterotrophic growth to autotrophic growth (PubMed:21693514). Interaction with mastrevirus RepA or nanovirus Clink protein disrupts the RBR/E2F interaction and releases the transcription of replicative enzymes needed by the virus by increasing the E2F DNA-binding activity (PubMed:16361519).</text>
</comment>
<comment type="subunit">
    <text evidence="2 5 6 9 10 11 17 22 24 28 30 31">Interacts with the begomovirus replication-associated protein (Rep) (PubMed:10880461), the nanovirus Clink protein (PubMed:17267511), the mastrevirus RepA protein, E2FA, E2FB and E2FC (PubMed:16055635, PubMed:16361519, PubMed:18064404, PubMed:20683442, PubMed:22307083). Interacts with MSI1 through its Domain A (PubMed:18700816). Interacts with ATPK1/S6K1 (PubMed:20683442). Interacts with SCR (PubMed:22921914, PubMed:24302889). Interacts with HAT2 (PubMed:24302889). Interacts with FAMA (PubMed:24571519, PubMed:25303364). Interacts with MYB124 and MYB88 (PubMed:24571519). Component of a DREAM-like complex which modulates a variety of developmentally regulated genes and of the mitotic genes in proliferating and differentiated cells. Associates with MYB3R3 in both earlier and later stages of leaves development. Interacts with MYB3R4 only at early stages of leaves development (PubMed:26069325).</text>
</comment>
<comment type="interaction">
    <interactant intactId="EBI-398590">
        <id>Q9LKZ3</id>
    </interactant>
    <interactant intactId="EBI-8107038">
        <id>P42818</id>
        <label>ATPK1</label>
    </interactant>
    <organismsDiffer>false</organismsDiffer>
    <experiments>2</experiments>
</comment>
<comment type="interaction">
    <interactant intactId="EBI-398590">
        <id>Q9LKZ3</id>
    </interactant>
    <interactant intactId="EBI-1774747">
        <id>Q9FNY0</id>
        <label>E2FA</label>
    </interactant>
    <organismsDiffer>false</organismsDiffer>
    <experiments>4</experiments>
</comment>
<comment type="interaction">
    <interactant intactId="EBI-398590">
        <id>Q9LKZ3</id>
    </interactant>
    <interactant intactId="EBI-1774719">
        <id>Q9FV71</id>
        <label>E2FB</label>
    </interactant>
    <organismsDiffer>false</organismsDiffer>
    <experiments>4</experiments>
</comment>
<comment type="interaction">
    <interactant intactId="EBI-398590">
        <id>Q9LKZ3</id>
    </interactant>
    <interactant intactId="EBI-2131346">
        <id>Q9FV70</id>
        <label>E2FC</label>
    </interactant>
    <organismsDiffer>false</organismsDiffer>
    <experiments>2</experiments>
</comment>
<comment type="interaction">
    <interactant intactId="EBI-398590">
        <id>Q9LKZ3</id>
    </interactant>
    <interactant intactId="EBI-307146">
        <id>Q9LT47</id>
        <label>FIE</label>
    </interactant>
    <organismsDiffer>false</organismsDiffer>
    <experiments>2</experiments>
</comment>
<comment type="interaction">
    <interactant intactId="EBI-398590">
        <id>Q9LKZ3</id>
    </interactant>
    <interactant intactId="EBI-632891">
        <id>O22467</id>
        <label>MSI1</label>
    </interactant>
    <organismsDiffer>false</organismsDiffer>
    <experiments>2</experiments>
</comment>
<comment type="interaction">
    <interactant intactId="EBI-398590">
        <id>Q9LKZ3</id>
    </interactant>
    <interactant intactId="EBI-1250484">
        <id>Q9M384</id>
        <label>SCR</label>
    </interactant>
    <organismsDiffer>false</organismsDiffer>
    <experiments>4</experiments>
</comment>
<comment type="subcellular location">
    <subcellularLocation>
        <location evidence="17">Nucleus</location>
    </subcellularLocation>
    <text evidence="17">RBR1 nuclear localization is mediated by the RBR1-ATPK1 interaction.</text>
</comment>
<comment type="alternative products">
    <event type="alternative splicing"/>
    <isoform>
        <id>Q9LKZ3-1</id>
        <name>1</name>
        <sequence type="displayed"/>
    </isoform>
    <text>A number of isoforms are produced. According to EST sequences.</text>
</comment>
<comment type="tissue specificity">
    <text evidence="4">Expressed in actively dividing cells. Detected in the shoot apical meristem, in young leaf primordia and in both sporophytic tissue and the megagametophyte.</text>
</comment>
<comment type="developmental stage">
    <text evidence="4 18">Highly expressed before and after fertilization (PubMed:15201912). During meiosis, found to localize along the chromosome axes during late G2/early leptotene. As prophase I progressed, a lower expression is detectable at zygotene then more reduced at pachytene. Not detected at later stages (PubMed:21217641).</text>
</comment>
<comment type="induction">
    <text evidence="12 21">The polycomb repressive complex 2 (PRC2) containing MSI1, MEA, FIS2 and FIE repress the paternal RBR allele during pollen and seed development (PubMed:18976913). Down-regulated by TCP15 (PubMed:21992944).</text>
</comment>
<comment type="PTM">
    <text evidence="3 10 23">Highly phosphorylated by CDKA-1 during G1 to S phase transition. Once hyper-phosphorylated, becomes inactive and unable to interact with E2F.</text>
</comment>
<comment type="PTM">
    <text evidence="19 32">Ubiquitinated (Probable). Subject to proteasome-dependent degradation during sucrose starvation (PubMed:21444209).</text>
</comment>
<comment type="disruption phenotype">
    <text evidence="4 18">Plants are gametophytic lethals (PubMed:15201912). During meiosis, reduction in the formation of meiotic crossing-overs and a failure of chromosome synapsis, leading to a dramatic reduction in fertility (PubMed:21217641).</text>
</comment>
<comment type="similarity">
    <text evidence="32">Belongs to the retinoblastoma protein (RB) family.</text>
</comment>
<comment type="sequence caution" evidence="32">
    <conflict type="erroneous gene model prediction">
        <sequence resource="EMBL-CDS" id="AAG51072"/>
    </conflict>
</comment>
<comment type="sequence caution" evidence="32">
    <conflict type="erroneous gene model prediction">
        <sequence resource="EMBL-CDS" id="BAB03137"/>
    </conflict>
</comment>
<protein>
    <recommendedName>
        <fullName>Retinoblastoma-related protein 1</fullName>
        <shortName>AtRBR</shortName>
        <shortName>AtRBR1</shortName>
    </recommendedName>
</protein>
<proteinExistence type="evidence at protein level"/>
<accession>Q9LKZ3</accession>
<accession>Q93ZS5</accession>
<accession>Q9C7C9</accession>
<accession>Q9LHH8</accession>
<evidence type="ECO:0000256" key="1">
    <source>
        <dbReference type="SAM" id="MobiDB-lite"/>
    </source>
</evidence>
<evidence type="ECO:0000269" key="2">
    <source>
    </source>
</evidence>
<evidence type="ECO:0000269" key="3">
    <source>
    </source>
</evidence>
<evidence type="ECO:0000269" key="4">
    <source>
    </source>
</evidence>
<evidence type="ECO:0000269" key="5">
    <source>
    </source>
</evidence>
<evidence type="ECO:0000269" key="6">
    <source>
    </source>
</evidence>
<evidence type="ECO:0000269" key="7">
    <source>
    </source>
</evidence>
<evidence type="ECO:0000269" key="8">
    <source>
    </source>
</evidence>
<evidence type="ECO:0000269" key="9">
    <source>
    </source>
</evidence>
<evidence type="ECO:0000269" key="10">
    <source>
    </source>
</evidence>
<evidence type="ECO:0000269" key="11">
    <source>
    </source>
</evidence>
<evidence type="ECO:0000269" key="12">
    <source>
    </source>
</evidence>
<evidence type="ECO:0000269" key="13">
    <source>
    </source>
</evidence>
<evidence type="ECO:0000269" key="14">
    <source>
    </source>
</evidence>
<evidence type="ECO:0000269" key="15">
    <source>
    </source>
</evidence>
<evidence type="ECO:0000269" key="16">
    <source>
    </source>
</evidence>
<evidence type="ECO:0000269" key="17">
    <source>
    </source>
</evidence>
<evidence type="ECO:0000269" key="18">
    <source>
    </source>
</evidence>
<evidence type="ECO:0000269" key="19">
    <source>
    </source>
</evidence>
<evidence type="ECO:0000269" key="20">
    <source>
    </source>
</evidence>
<evidence type="ECO:0000269" key="21">
    <source>
    </source>
</evidence>
<evidence type="ECO:0000269" key="22">
    <source>
    </source>
</evidence>
<evidence type="ECO:0000269" key="23">
    <source>
    </source>
</evidence>
<evidence type="ECO:0000269" key="24">
    <source>
    </source>
</evidence>
<evidence type="ECO:0000269" key="25">
    <source>
    </source>
</evidence>
<evidence type="ECO:0000269" key="26">
    <source>
    </source>
</evidence>
<evidence type="ECO:0000269" key="27">
    <source>
    </source>
</evidence>
<evidence type="ECO:0000269" key="28">
    <source>
    </source>
</evidence>
<evidence type="ECO:0000269" key="29">
    <source>
    </source>
</evidence>
<evidence type="ECO:0000269" key="30">
    <source>
    </source>
</evidence>
<evidence type="ECO:0000269" key="31">
    <source>
    </source>
</evidence>
<evidence type="ECO:0000305" key="32"/>
<evidence type="ECO:0007744" key="33">
    <source>
    </source>
</evidence>
<evidence type="ECO:0007744" key="34">
    <source>
    </source>
</evidence>
<evidence type="ECO:0007744" key="35">
    <source>
    </source>
</evidence>
<reference key="1">
    <citation type="journal article" date="2000" name="EMBO J.">
        <title>A geminivirus replication protein interacts with the retinoblastoma protein through a novel domain to determine symptoms and tissue specificity of infection in plants.</title>
        <authorList>
            <person name="Kong L.-J."/>
            <person name="Orozco B.M."/>
            <person name="Roe J.L."/>
            <person name="Nagar S."/>
            <person name="Ou S."/>
            <person name="Feiler H.S."/>
            <person name="Durfee T."/>
            <person name="Miller A.B."/>
            <person name="Gruissem W."/>
            <person name="Robertson D."/>
            <person name="Hanley-Bowdoin L."/>
        </authorList>
    </citation>
    <scope>NUCLEOTIDE SEQUENCE [MRNA]</scope>
    <scope>INTERACTION WITH TOMATO GOLDEN MOSAIC VIRUS REP</scope>
</reference>
<reference key="2">
    <citation type="journal article" date="2000" name="DNA Res.">
        <title>Structural analysis of Arabidopsis thaliana chromosome 3. II. Sequence features of the 4,251,695 bp regions covered by 90 P1, TAC and BAC clones.</title>
        <authorList>
            <person name="Kaneko T."/>
            <person name="Katoh T."/>
            <person name="Sato S."/>
            <person name="Nakamura Y."/>
            <person name="Asamizu E."/>
            <person name="Tabata S."/>
        </authorList>
    </citation>
    <scope>NUCLEOTIDE SEQUENCE [LARGE SCALE GENOMIC DNA]</scope>
    <source>
        <strain>cv. Columbia</strain>
    </source>
</reference>
<reference key="3">
    <citation type="journal article" date="2000" name="Nature">
        <title>Sequence and analysis of chromosome 3 of the plant Arabidopsis thaliana.</title>
        <authorList>
            <person name="Salanoubat M."/>
            <person name="Lemcke K."/>
            <person name="Rieger M."/>
            <person name="Ansorge W."/>
            <person name="Unseld M."/>
            <person name="Fartmann B."/>
            <person name="Valle G."/>
            <person name="Bloecker H."/>
            <person name="Perez-Alonso M."/>
            <person name="Obermaier B."/>
            <person name="Delseny M."/>
            <person name="Boutry M."/>
            <person name="Grivell L.A."/>
            <person name="Mache R."/>
            <person name="Puigdomenech P."/>
            <person name="De Simone V."/>
            <person name="Choisne N."/>
            <person name="Artiguenave F."/>
            <person name="Robert C."/>
            <person name="Brottier P."/>
            <person name="Wincker P."/>
            <person name="Cattolico L."/>
            <person name="Weissenbach J."/>
            <person name="Saurin W."/>
            <person name="Quetier F."/>
            <person name="Schaefer M."/>
            <person name="Mueller-Auer S."/>
            <person name="Gabel C."/>
            <person name="Fuchs M."/>
            <person name="Benes V."/>
            <person name="Wurmbach E."/>
            <person name="Drzonek H."/>
            <person name="Erfle H."/>
            <person name="Jordan N."/>
            <person name="Bangert S."/>
            <person name="Wiedelmann R."/>
            <person name="Kranz H."/>
            <person name="Voss H."/>
            <person name="Holland R."/>
            <person name="Brandt P."/>
            <person name="Nyakatura G."/>
            <person name="Vezzi A."/>
            <person name="D'Angelo M."/>
            <person name="Pallavicini A."/>
            <person name="Toppo S."/>
            <person name="Simionati B."/>
            <person name="Conrad A."/>
            <person name="Hornischer K."/>
            <person name="Kauer G."/>
            <person name="Loehnert T.-H."/>
            <person name="Nordsiek G."/>
            <person name="Reichelt J."/>
            <person name="Scharfe M."/>
            <person name="Schoen O."/>
            <person name="Bargues M."/>
            <person name="Terol J."/>
            <person name="Climent J."/>
            <person name="Navarro P."/>
            <person name="Collado C."/>
            <person name="Perez-Perez A."/>
            <person name="Ottenwaelder B."/>
            <person name="Duchemin D."/>
            <person name="Cooke R."/>
            <person name="Laudie M."/>
            <person name="Berger-Llauro C."/>
            <person name="Purnelle B."/>
            <person name="Masuy D."/>
            <person name="de Haan M."/>
            <person name="Maarse A.C."/>
            <person name="Alcaraz J.-P."/>
            <person name="Cottet A."/>
            <person name="Casacuberta E."/>
            <person name="Monfort A."/>
            <person name="Argiriou A."/>
            <person name="Flores M."/>
            <person name="Liguori R."/>
            <person name="Vitale D."/>
            <person name="Mannhaupt G."/>
            <person name="Haase D."/>
            <person name="Schoof H."/>
            <person name="Rudd S."/>
            <person name="Zaccaria P."/>
            <person name="Mewes H.-W."/>
            <person name="Mayer K.F.X."/>
            <person name="Kaul S."/>
            <person name="Town C.D."/>
            <person name="Koo H.L."/>
            <person name="Tallon L.J."/>
            <person name="Jenkins J."/>
            <person name="Rooney T."/>
            <person name="Rizzo M."/>
            <person name="Walts A."/>
            <person name="Utterback T."/>
            <person name="Fujii C.Y."/>
            <person name="Shea T.P."/>
            <person name="Creasy T.H."/>
            <person name="Haas B."/>
            <person name="Maiti R."/>
            <person name="Wu D."/>
            <person name="Peterson J."/>
            <person name="Van Aken S."/>
            <person name="Pai G."/>
            <person name="Militscher J."/>
            <person name="Sellers P."/>
            <person name="Gill J.E."/>
            <person name="Feldblyum T.V."/>
            <person name="Preuss D."/>
            <person name="Lin X."/>
            <person name="Nierman W.C."/>
            <person name="Salzberg S.L."/>
            <person name="White O."/>
            <person name="Venter J.C."/>
            <person name="Fraser C.M."/>
            <person name="Kaneko T."/>
            <person name="Nakamura Y."/>
            <person name="Sato S."/>
            <person name="Kato T."/>
            <person name="Asamizu E."/>
            <person name="Sasamoto S."/>
            <person name="Kimura T."/>
            <person name="Idesawa K."/>
            <person name="Kawashima K."/>
            <person name="Kishida Y."/>
            <person name="Kiyokawa C."/>
            <person name="Kohara M."/>
            <person name="Matsumoto M."/>
            <person name="Matsuno A."/>
            <person name="Muraki A."/>
            <person name="Nakayama S."/>
            <person name="Nakazaki N."/>
            <person name="Shinpo S."/>
            <person name="Takeuchi C."/>
            <person name="Wada T."/>
            <person name="Watanabe A."/>
            <person name="Yamada M."/>
            <person name="Yasuda M."/>
            <person name="Tabata S."/>
        </authorList>
    </citation>
    <scope>NUCLEOTIDE SEQUENCE [LARGE SCALE GENOMIC DNA]</scope>
    <source>
        <strain>cv. Columbia</strain>
    </source>
</reference>
<reference key="4">
    <citation type="journal article" date="2017" name="Plant J.">
        <title>Araport11: a complete reannotation of the Arabidopsis thaliana reference genome.</title>
        <authorList>
            <person name="Cheng C.Y."/>
            <person name="Krishnakumar V."/>
            <person name="Chan A.P."/>
            <person name="Thibaud-Nissen F."/>
            <person name="Schobel S."/>
            <person name="Town C.D."/>
        </authorList>
    </citation>
    <scope>GENOME REANNOTATION</scope>
    <source>
        <strain>cv. Columbia</strain>
    </source>
</reference>
<reference key="5">
    <citation type="journal article" date="2003" name="Science">
        <title>Empirical analysis of transcriptional activity in the Arabidopsis genome.</title>
        <authorList>
            <person name="Yamada K."/>
            <person name="Lim J."/>
            <person name="Dale J.M."/>
            <person name="Chen H."/>
            <person name="Shinn P."/>
            <person name="Palm C.J."/>
            <person name="Southwick A.M."/>
            <person name="Wu H.C."/>
            <person name="Kim C.J."/>
            <person name="Nguyen M."/>
            <person name="Pham P.K."/>
            <person name="Cheuk R.F."/>
            <person name="Karlin-Newmann G."/>
            <person name="Liu S.X."/>
            <person name="Lam B."/>
            <person name="Sakano H."/>
            <person name="Wu T."/>
            <person name="Yu G."/>
            <person name="Miranda M."/>
            <person name="Quach H.L."/>
            <person name="Tripp M."/>
            <person name="Chang C.H."/>
            <person name="Lee J.M."/>
            <person name="Toriumi M.J."/>
            <person name="Chan M.M."/>
            <person name="Tang C.C."/>
            <person name="Onodera C.S."/>
            <person name="Deng J.M."/>
            <person name="Akiyama K."/>
            <person name="Ansari Y."/>
            <person name="Arakawa T."/>
            <person name="Banh J."/>
            <person name="Banno F."/>
            <person name="Bowser L."/>
            <person name="Brooks S.Y."/>
            <person name="Carninci P."/>
            <person name="Chao Q."/>
            <person name="Choy N."/>
            <person name="Enju A."/>
            <person name="Goldsmith A.D."/>
            <person name="Gurjal M."/>
            <person name="Hansen N.F."/>
            <person name="Hayashizaki Y."/>
            <person name="Johnson-Hopson C."/>
            <person name="Hsuan V.W."/>
            <person name="Iida K."/>
            <person name="Karnes M."/>
            <person name="Khan S."/>
            <person name="Koesema E."/>
            <person name="Ishida J."/>
            <person name="Jiang P.X."/>
            <person name="Jones T."/>
            <person name="Kawai J."/>
            <person name="Kamiya A."/>
            <person name="Meyers C."/>
            <person name="Nakajima M."/>
            <person name="Narusaka M."/>
            <person name="Seki M."/>
            <person name="Sakurai T."/>
            <person name="Satou M."/>
            <person name="Tamse R."/>
            <person name="Vaysberg M."/>
            <person name="Wallender E.K."/>
            <person name="Wong C."/>
            <person name="Yamamura Y."/>
            <person name="Yuan S."/>
            <person name="Shinozaki K."/>
            <person name="Davis R.W."/>
            <person name="Theologis A."/>
            <person name="Ecker J.R."/>
        </authorList>
    </citation>
    <scope>NUCLEOTIDE SEQUENCE [LARGE SCALE MRNA]</scope>
    <source>
        <strain>cv. Columbia</strain>
    </source>
</reference>
<reference key="6">
    <citation type="journal article" date="2001" name="Plant J.">
        <title>A cell-cycle-regulated kinase activity phosphorylates plant retinoblastoma protein and contains, in Arabidopsis, a CDKA/cyclin D complex.</title>
        <authorList>
            <person name="Boniotti M.B."/>
            <person name="Gutierrez C."/>
        </authorList>
    </citation>
    <scope>PHOSPHORYLATION BY A CDKA/CYCLIN D KINASE COMPLEX</scope>
</reference>
<reference key="7">
    <citation type="journal article" date="2004" name="Nature">
        <title>Plant retinoblastoma homologues control nuclear proliferation in the female gametophyte.</title>
        <authorList>
            <person name="Ebel C."/>
            <person name="Mariconti L."/>
            <person name="Gruissem W."/>
        </authorList>
    </citation>
    <scope>FUNCTION</scope>
    <scope>TISSUE SPECIFICITY</scope>
    <scope>DEVELOPMENTAL STAGE</scope>
    <scope>DISRUPTION PHENOTYPE</scope>
</reference>
<reference key="8">
    <citation type="journal article" date="2005" name="Cell">
        <title>The RETINOBLASTOMA-RELATED gene regulates stem cell maintenance in Arabidopsis roots.</title>
        <authorList>
            <person name="Wildwater M."/>
            <person name="Campilho A."/>
            <person name="Perez-Perez J.M."/>
            <person name="Heidstra R."/>
            <person name="Blilou I."/>
            <person name="Korthout H."/>
            <person name="Chatterjee J."/>
            <person name="Mariconti L."/>
            <person name="Gruissem W."/>
            <person name="Scheres B."/>
        </authorList>
    </citation>
    <scope>FUNCTION</scope>
</reference>
<reference key="9">
    <citation type="journal article" date="2005" name="Plant Cell">
        <title>The role of the Arabidopsis E2FB transcription factor in regulating auxin-dependent cell division.</title>
        <authorList>
            <person name="Magyar Z."/>
            <person name="De Veylder L."/>
            <person name="Atanassova A."/>
            <person name="Bako L."/>
            <person name="Inze D."/>
            <person name="Boegre L."/>
        </authorList>
    </citation>
    <scope>INTERACTION WITH E2FB</scope>
</reference>
<reference key="10">
    <citation type="journal article" date="2006" name="Plant Physiol.">
        <title>Cell type-specific role of the retinoblastoma/E2F pathway during Arabidopsis leaf development.</title>
        <authorList>
            <person name="Desvoyes B."/>
            <person name="Ramirez-Parra E."/>
            <person name="Xie Q."/>
            <person name="Chua N.-H."/>
            <person name="Gutierrez C."/>
        </authorList>
    </citation>
    <scope>FUNCTION</scope>
    <scope>INTERACTION WITH WHEAT DWARF VIRUS REPA; E2FA; E2FB AND E2FC</scope>
</reference>
<reference key="11">
    <citation type="journal article" date="2006" name="Plant Physiol.">
        <title>Induction of differentiation in the shoot apical meristem by transient overexpression of a retinoblastoma-related protein.</title>
        <authorList>
            <person name="Wyrzykowska J."/>
            <person name="Schorderet M."/>
            <person name="Pien S."/>
            <person name="Gruissem W."/>
            <person name="Fleming A.J."/>
        </authorList>
    </citation>
    <scope>FUNCTION</scope>
</reference>
<reference key="12">
    <citation type="journal article" date="2007" name="J. Virol.">
        <title>The nanovirus-encoded Clink protein affects plant cell cycle regulation through interaction with the retinoblastoma-related protein.</title>
        <authorList>
            <person name="Lageix S."/>
            <person name="Catrice O."/>
            <person name="Deragon J.-M."/>
            <person name="Gronenborn B."/>
            <person name="Pelissier T."/>
            <person name="Ramirez B.C."/>
        </authorList>
    </citation>
    <scope>INTERACTION WITH NANOVIRUS CLINK PROTEIN</scope>
</reference>
<reference key="13">
    <citation type="journal article" date="2008" name="J. Proteome Res.">
        <title>Site-specific phosphorylation profiling of Arabidopsis proteins by mass spectrometry and peptide chip analysis.</title>
        <authorList>
            <person name="de la Fuente van Bentem S."/>
            <person name="Anrather D."/>
            <person name="Dohnal I."/>
            <person name="Roitinger E."/>
            <person name="Csaszar E."/>
            <person name="Joore J."/>
            <person name="Buijnink J."/>
            <person name="Carreri A."/>
            <person name="Forzani C."/>
            <person name="Lorkovic Z.J."/>
            <person name="Barta A."/>
            <person name="Lecourieux D."/>
            <person name="Verhounig A."/>
            <person name="Jonak C."/>
            <person name="Hirt H."/>
        </authorList>
    </citation>
    <scope>PHOSPHORYLATION [LARGE SCALE ANALYSIS] AT SER-898</scope>
    <scope>IDENTIFICATION BY MASS SPECTROMETRY [LARGE SCALE ANALYSIS]</scope>
    <source>
        <tissue>Root</tissue>
    </source>
</reference>
<reference key="14">
    <citation type="journal article" date="2008" name="Plant Mol. Biol.">
        <title>Arabidopsis RETINOBLASTOMA-RELATED PROTEIN 1 is involved in G1 phase cell cycle arrest caused by sucrose starvation.</title>
        <authorList>
            <person name="Hirano H."/>
            <person name="Harashima H."/>
            <person name="Shinmyo A."/>
            <person name="Sekine M."/>
        </authorList>
    </citation>
    <scope>FUNCTION</scope>
    <scope>PHOSPHORYLATION</scope>
    <scope>INTERACTION WITH E2FA</scope>
</reference>
<reference key="15">
    <citation type="journal article" date="2008" name="PLoS Biol.">
        <title>Retinoblastoma and its binding partner MSI1 control imprinting in Arabidopsis.</title>
        <authorList>
            <person name="Jullien P.E."/>
            <person name="Mosquna A."/>
            <person name="Ingouff M."/>
            <person name="Sakata T."/>
            <person name="Ohad N."/>
            <person name="Berger F."/>
        </authorList>
    </citation>
    <scope>FUNCTION</scope>
    <scope>INTERACTION WITH MSI1</scope>
</reference>
<reference key="16">
    <citation type="journal article" date="2008" name="Curr. Biol.">
        <title>A dynamic reciprocal RBR-PRC2 regulatory circuit controls Arabidopsis gametophyte development.</title>
        <authorList>
            <person name="Johnston A.J."/>
            <person name="Matveeva E."/>
            <person name="Kirioukhova O."/>
            <person name="Grossniklaus U."/>
            <person name="Gruissem W."/>
        </authorList>
    </citation>
    <scope>FUNCTION</scope>
    <scope>INDUCTION</scope>
</reference>
<reference key="17">
    <citation type="journal article" date="2009" name="J. Proteomics">
        <title>Phosphoproteomic analysis of nuclei-enriched fractions from Arabidopsis thaliana.</title>
        <authorList>
            <person name="Jones A.M.E."/>
            <person name="MacLean D."/>
            <person name="Studholme D.J."/>
            <person name="Serna-Sanz A."/>
            <person name="Andreasson E."/>
            <person name="Rathjen J.P."/>
            <person name="Peck S.C."/>
        </authorList>
    </citation>
    <scope>PHOSPHORYLATION [LARGE SCALE ANALYSIS] AT SER-898</scope>
    <scope>IDENTIFICATION BY MASS SPECTROMETRY [LARGE SCALE ANALYSIS]</scope>
    <source>
        <strain>cv. Columbia</strain>
    </source>
</reference>
<reference key="18">
    <citation type="journal article" date="2009" name="Plant Physiol.">
        <title>Large-scale Arabidopsis phosphoproteome profiling reveals novel chloroplast kinase substrates and phosphorylation networks.</title>
        <authorList>
            <person name="Reiland S."/>
            <person name="Messerli G."/>
            <person name="Baerenfaller K."/>
            <person name="Gerrits B."/>
            <person name="Endler A."/>
            <person name="Grossmann J."/>
            <person name="Gruissem W."/>
            <person name="Baginsky S."/>
        </authorList>
    </citation>
    <scope>PHOSPHORYLATION [LARGE SCALE ANALYSIS] AT SER-885 AND SER-898</scope>
    <scope>IDENTIFICATION BY MASS SPECTROMETRY [LARGE SCALE ANALYSIS]</scope>
</reference>
<reference key="19">
    <citation type="journal article" date="2009" name="Proc. Natl. Acad. Sci. U.S.A.">
        <title>Proliferation and cell fate establishment during Arabidopsis male gametogenesis depends on the Retinoblastoma protein.</title>
        <authorList>
            <person name="Chen Z."/>
            <person name="Hafidh S."/>
            <person name="Poh S.H."/>
            <person name="Twell D."/>
            <person name="Berger F."/>
        </authorList>
    </citation>
    <scope>FUNCTION</scope>
</reference>
<reference key="20">
    <citation type="journal article" date="2009" name="Commun. Integr. Biol.">
        <title>Gametophyte differentiation and imprinting control in plants: Crosstalk between RBR and chromatin.</title>
        <authorList>
            <person name="Johnston A.J."/>
            <person name="Gruissem W."/>
        </authorList>
    </citation>
    <scope>FUNCTION</scope>
    <scope>REVIEW</scope>
</reference>
<reference key="21">
    <citation type="journal article" date="2010" name="Plant Cell">
        <title>Arabidopsis RETINOBLASTOMA-RELATED is required for stem cell maintenance, cell differentiation, and lateral organ production.</title>
        <authorList>
            <person name="Borghi L."/>
            <person name="Gutzat R."/>
            <person name="Futterer J."/>
            <person name="Laizet Y."/>
            <person name="Hennig L."/>
            <person name="Gruissem W."/>
        </authorList>
    </citation>
    <scope>FUNCTION</scope>
</reference>
<reference key="22">
    <citation type="journal article" date="2010" name="PLoS Genet.">
        <title>Dosage-sensitive function of retinoblastoma related and convergent epigenetic control are required during the Arabidopsis life cycle.</title>
        <authorList>
            <person name="Johnston A.J."/>
            <person name="Kirioukhova O."/>
            <person name="Barrell P.J."/>
            <person name="Rutten T."/>
            <person name="Moore J.M."/>
            <person name="Baskar R."/>
            <person name="Grossniklaus U."/>
            <person name="Gruissem W."/>
        </authorList>
    </citation>
    <scope>FUNCTION</scope>
</reference>
<reference key="23">
    <citation type="journal article" date="2010" name="EMBO J.">
        <title>Arabidopsis S6 kinase mutants display chromosome instability and altered RBR1-E2F pathway activity.</title>
        <authorList>
            <person name="Henriques R."/>
            <person name="Magyar Z."/>
            <person name="Monardes A."/>
            <person name="Khan S."/>
            <person name="Zalejski C."/>
            <person name="Orellana J."/>
            <person name="Szabados L."/>
            <person name="de la Torre C."/>
            <person name="Koncz C."/>
            <person name="Bogre L."/>
        </authorList>
    </citation>
    <scope>FUNCTION</scope>
    <scope>INTERACTION WITH ATPK1/S6K1 AND E2FB</scope>
    <scope>SUBCELLULAR LOCATION</scope>
</reference>
<reference key="24">
    <citation type="journal article" date="2011" name="EMBO J.">
        <title>Retinoblastoma protein is essential for early meiotic events in Arabidopsis.</title>
        <authorList>
            <person name="Chen Z."/>
            <person name="Higgins J.D."/>
            <person name="Hui J.T."/>
            <person name="Li J."/>
            <person name="Franklin F.C."/>
            <person name="Berger F."/>
        </authorList>
    </citation>
    <scope>FUNCTION</scope>
    <scope>DISRUPTION PHENOTYPE</scope>
    <scope>DEVELOPMENTAL STAGE</scope>
</reference>
<reference key="25">
    <citation type="journal article" date="2011" name="Plant Physiol. Biochem.">
        <title>Arabidopsis G1 cell cycle proteins undergo proteasome-dependent degradation during sucrose starvation.</title>
        <authorList>
            <person name="Hirano H."/>
            <person name="Shinmyo A."/>
            <person name="Sekine M."/>
        </authorList>
    </citation>
    <scope>FUNCTION</scope>
    <scope>DEGRADATION BY THE PROTEASOME PATHWAY</scope>
</reference>
<reference key="26">
    <citation type="journal article" date="2011" name="Development">
        <title>RETINOBLASTOMA-RELATED PROTEIN controls the transition to autotrophic plant development.</title>
        <authorList>
            <person name="Gutzat R."/>
            <person name="Borghi L."/>
            <person name="Futterer J."/>
            <person name="Bischof S."/>
            <person name="Laizet Y."/>
            <person name="Hennig L."/>
            <person name="Feil R."/>
            <person name="Lunn J."/>
            <person name="Gruissem W."/>
        </authorList>
    </citation>
    <scope>FUNCTION</scope>
</reference>
<reference key="27">
    <citation type="journal article" date="2012" name="Mol. Plant">
        <title>The Arabidopsis transcription factor AtTCP15 regulates endoreduplication by modulating expression of key cell-cycle genes.</title>
        <authorList>
            <person name="Li Z.Y."/>
            <person name="Li B."/>
            <person name="Dong A.W."/>
        </authorList>
    </citation>
    <scope>INDUCTION BY TCP15</scope>
</reference>
<reference key="28">
    <citation type="journal article" date="2012" name="Trends Plant Sci.">
        <title>Emerging roles of RETINOBLASTOMA-RELATED proteins in evolution and plant development.</title>
        <authorList>
            <person name="Gutzat R."/>
            <person name="Borghi L."/>
            <person name="Gruissem W."/>
        </authorList>
    </citation>
    <scope>REVIEW</scope>
</reference>
<reference key="29">
    <citation type="journal article" date="2012" name="Dev. Cell">
        <title>Genetic framework of cyclin-dependent kinase function in Arabidopsis.</title>
        <authorList>
            <person name="Nowack M.K."/>
            <person name="Harashima H."/>
            <person name="Dissmeyer N."/>
            <person name="Zhao X."/>
            <person name="Bouyer D."/>
            <person name="Weimer A.K."/>
            <person name="De Winter F."/>
            <person name="Yang F."/>
            <person name="Schnittger A."/>
        </authorList>
    </citation>
    <scope>FUNCTION</scope>
    <scope>PHOSPHORYLATION BY CDKA-1</scope>
</reference>
<reference key="30">
    <citation type="journal article" date="2012" name="EMBO J.">
        <title>Arabidopsis E2FA stimulates proliferation and endocycle separately through RBR-bound and RBR-free complexes.</title>
        <authorList>
            <person name="Magyar Z."/>
            <person name="Horvath B."/>
            <person name="Khan S."/>
            <person name="Mohammed B."/>
            <person name="Henriques R."/>
            <person name="De Veylder L."/>
            <person name="Bako L."/>
            <person name="Scheres B."/>
            <person name="Bogre L."/>
        </authorList>
    </citation>
    <scope>FUNCTION</scope>
    <scope>INTERACTION WITH E2FA AND E2FB</scope>
</reference>
<reference key="31">
    <citation type="journal article" date="2012" name="Cell">
        <title>A bistable circuit involving SCARECROW-RETINOBLASTOMA integrates cues to inform asymmetric stem cell division.</title>
        <authorList>
            <person name="Cruz-Ramirez A."/>
            <person name="Diaz-Trivino S."/>
            <person name="Blilou I."/>
            <person name="Grieneisen V.A."/>
            <person name="Sozzani R."/>
            <person name="Zamioudis C."/>
            <person name="Miskolczi P."/>
            <person name="Nieuwland J."/>
            <person name="Benjamins R."/>
            <person name="Dhonukshe P."/>
            <person name="Caballero-Perez J."/>
            <person name="Horvath B."/>
            <person name="Long Y."/>
            <person name="Mahonen A.P."/>
            <person name="Zhang H."/>
            <person name="Xu J."/>
            <person name="Murray J.A."/>
            <person name="Benfey P.N."/>
            <person name="Bako L."/>
            <person name="Maree A.F."/>
            <person name="Scheres B."/>
        </authorList>
    </citation>
    <scope>FUNCTION</scope>
    <scope>INTERACTION WITH SCR</scope>
</reference>
<reference key="32">
    <citation type="journal article" date="2012" name="Plant Cell">
        <title>Retinoblastoma related1 regulates asymmetric cell divisions in Arabidopsis.</title>
        <authorList>
            <person name="Weimer A.K."/>
            <person name="Nowack M.K."/>
            <person name="Bouyer D."/>
            <person name="Zhao X."/>
            <person name="Harashima H."/>
            <person name="Naseer S."/>
            <person name="De Winter F."/>
            <person name="Dissmeyer N."/>
            <person name="Geldner N."/>
            <person name="Schnittger A."/>
        </authorList>
    </citation>
    <scope>FUNCTION</scope>
</reference>
<reference key="33">
    <citation type="journal article" date="2013" name="Plant J.">
        <title>Increased leaf mesophyll porosity following transient retinoblastoma-related protein silencing is revealed by microcomputed tomography imaging and leads to a system-level physiological response to the altered cell division pattern.</title>
        <authorList>
            <person name="Dorca-Fornell C."/>
            <person name="Pajor R."/>
            <person name="Lehmeier C."/>
            <person name="Perez-Bueno M."/>
            <person name="Bauch M."/>
            <person name="Sloan J."/>
            <person name="Osborne C."/>
            <person name="Rolfe S."/>
            <person name="Sturrock C."/>
            <person name="Mooney S."/>
            <person name="Fleming A."/>
        </authorList>
    </citation>
    <scope>FUNCTION</scope>
</reference>
<reference key="34">
    <citation type="journal article" date="2013" name="Plant Cell">
        <title>RETINOBLASTOMA-RELATED protein stimulates cell differentiation in the Arabidopsis root meristem by interacting with cytokinin signaling.</title>
        <authorList>
            <person name="Perilli S."/>
            <person name="Perez-Perez J.M."/>
            <person name="Di Mambro R."/>
            <person name="Peris C.L."/>
            <person name="Diaz-Trivino S."/>
            <person name="Del Bianco M."/>
            <person name="Pierdonati E."/>
            <person name="Moubayidin L."/>
            <person name="Cruz-Ramirez A."/>
            <person name="Costantino P."/>
            <person name="Scheres B."/>
            <person name="Sabatini S."/>
        </authorList>
    </citation>
    <scope>FUNCTION</scope>
</reference>
<reference key="35">
    <citation type="journal article" date="2013" name="PLoS Biol.">
        <title>A SCARECROW-RETINOBLASTOMA protein network controls protective quiescence in the Arabidopsis root stem cell organizer.</title>
        <authorList>
            <person name="Cruz-Ramirez A."/>
            <person name="Diaz-Trivino S."/>
            <person name="Wachsman G."/>
            <person name="Du Y."/>
            <person name="Arteaga-Vazquez M."/>
            <person name="Zhang H."/>
            <person name="Benjamins R."/>
            <person name="Blilou I."/>
            <person name="Neef A.B."/>
            <person name="Chandler V."/>
            <person name="Scheres B."/>
        </authorList>
    </citation>
    <scope>FUNCTION</scope>
    <scope>INTERACTION WITH HAT2</scope>
    <scope>MUTAGENESIS OF ASN-849</scope>
</reference>
<reference key="36">
    <citation type="journal article" date="2014" name="PLoS Biol.">
        <authorList>
            <person name="Cruz-Ramirez A."/>
            <person name="Diaz-Trivino S."/>
            <person name="Wachsman G."/>
            <person name="Du Y."/>
            <person name="Arteaga-Vazquez M."/>
            <person name="Zhang H."/>
            <person name="Benjamins R."/>
            <person name="Blilou I."/>
            <person name="Neef A.B."/>
            <person name="Chandler V."/>
            <person name="Scheres B."/>
        </authorList>
    </citation>
    <scope>ERRATUM OF PUBMED:24302889</scope>
</reference>
<reference key="37">
    <citation type="journal article" date="2014" name="J. Exp. Bot.">
        <title>Arabidopsis RETINOBLASTOMA-RELATED and Polycomb group proteins: cooperation during plant cell differentiation and development.</title>
        <authorList>
            <person name="Kuwabara A."/>
            <person name="Gruissem W."/>
        </authorList>
    </citation>
    <scope>REVIEW</scope>
</reference>
<reference key="38">
    <citation type="journal article" date="2014" name="Elife">
        <title>Irreversible fate commitment in the Arabidopsis stomatal lineage requires a FAMA and RETINOBLASTOMA-RELATED module.</title>
        <authorList>
            <person name="Matos J.L."/>
            <person name="Lau O.S."/>
            <person name="Hachez C."/>
            <person name="Cruz-Ramirez A."/>
            <person name="Scheres B."/>
            <person name="Bergmann D.C."/>
        </authorList>
    </citation>
    <scope>FUNCTION</scope>
    <scope>INTERACTION WITH FAMA</scope>
</reference>
<reference key="39">
    <citation type="journal article" date="2014" name="Plant J.">
        <title>Deep functional redundancy between FAMA and FOUR LIPS in stomatal development.</title>
        <authorList>
            <person name="Lee E."/>
            <person name="Lucas J.R."/>
            <person name="Sack F.D."/>
        </authorList>
    </citation>
    <scope>INTERACTION WITH FAMA; MYB124 AND MYB88</scope>
    <source>
        <strain>cv. Columbia</strain>
    </source>
</reference>
<reference key="40">
    <citation type="journal article" date="2015" name="EMBO J.">
        <title>Transcriptional repression by MYB3R proteins regulates plant organ growth.</title>
        <authorList>
            <person name="Kobayashi K."/>
            <person name="Suzuki T."/>
            <person name="Iwata E."/>
            <person name="Nakamichi N."/>
            <person name="Suzuki T."/>
            <person name="Chen P."/>
            <person name="Ohtani M."/>
            <person name="Ishida T."/>
            <person name="Hosoya H."/>
            <person name="Mueller S."/>
            <person name="Leviczky T."/>
            <person name="Pettko-Szandtner A."/>
            <person name="Darula Z."/>
            <person name="Iwamoto A."/>
            <person name="Nomoto M."/>
            <person name="Tada Y."/>
            <person name="Higashiyama T."/>
            <person name="Demura T."/>
            <person name="Doonan J.H."/>
            <person name="Hauser M.T."/>
            <person name="Sugimoto K."/>
            <person name="Umeda M."/>
            <person name="Magyar Z."/>
            <person name="Boegre L."/>
            <person name="Ito M."/>
        </authorList>
    </citation>
    <scope>INTERACTION WITH MYB3R3 AND MYB3R4</scope>
    <source>
        <strain>cv. Columbia</strain>
    </source>
</reference>